<keyword id="KW-0320">Glycogen biosynthesis</keyword>
<keyword id="KW-0328">Glycosyltransferase</keyword>
<keyword id="KW-1185">Reference proteome</keyword>
<keyword id="KW-0808">Transferase</keyword>
<reference key="1">
    <citation type="journal article" date="2006" name="Appl. Environ. Microbiol.">
        <title>Complete genome sequence of the marine, chemolithoautotrophic, ammonia-oxidizing bacterium Nitrosococcus oceani ATCC 19707.</title>
        <authorList>
            <person name="Klotz M.G."/>
            <person name="Arp D.J."/>
            <person name="Chain P.S.G."/>
            <person name="El-Sheikh A.F."/>
            <person name="Hauser L.J."/>
            <person name="Hommes N.G."/>
            <person name="Larimer F.W."/>
            <person name="Malfatti S.A."/>
            <person name="Norton J.M."/>
            <person name="Poret-Peterson A.T."/>
            <person name="Vergez L.M."/>
            <person name="Ward B.B."/>
        </authorList>
    </citation>
    <scope>NUCLEOTIDE SEQUENCE [LARGE SCALE GENOMIC DNA]</scope>
    <source>
        <strain>ATCC 19707 / BCRC 17464 / JCM 30415 / NCIMB 11848 / C-107</strain>
    </source>
</reference>
<feature type="chain" id="PRO_0000230249" description="Glycogen synthase 2">
    <location>
        <begin position="1"/>
        <end position="491"/>
    </location>
</feature>
<feature type="binding site" evidence="1">
    <location>
        <position position="16"/>
    </location>
    <ligand>
        <name>ADP-alpha-D-glucose</name>
        <dbReference type="ChEBI" id="CHEBI:57498"/>
    </ligand>
</feature>
<sequence>MYKILFATSEAHPLIKTGGLGDVAGILPIELARLGLEAGIILPAYPACKTHLKNLKEVARLRLPAALEPVRILKGQLLEGPNPVWLVDSPAHFDRPGNPYLNEQGQDWPDNAARFTTFCRAVATLANSPEFDWQPDLIHCNDWQTGLIPPFLAPLRSRPATLFTIHNLAYQGVFSRQQFDALELPSAWWSPAALEFYNQISFIKGGLVFADWLTTVSPTYAKEILTPEFGCGLDGVLRGRSKRLTGILNGADYQRWDPRHDPFIEKRYDQTCWSHKASNKLALQRRYGLPEDDTLPVLGFVGRLVEQKGIDLILGALPKLLAEKIQVVFLGEGEERHQNALQQLASRYPNQIGVSISYDERLAHGVQAGADIFLMPSRFEPCGLTQLYALRYGTVPIARRTGGLSDTIVDATEKNLRQELATGFTFTESSPSALLTAIQRALACYAQSRQWRRLALTGMAQNFSWQTSAKAYFDLYQQLVSQEFSCKNNVL</sequence>
<comment type="function">
    <text evidence="1">Synthesizes alpha-1,4-glucan chains using ADP-glucose.</text>
</comment>
<comment type="catalytic activity">
    <reaction evidence="1">
        <text>[(1-&gt;4)-alpha-D-glucosyl](n) + ADP-alpha-D-glucose = [(1-&gt;4)-alpha-D-glucosyl](n+1) + ADP + H(+)</text>
        <dbReference type="Rhea" id="RHEA:18189"/>
        <dbReference type="Rhea" id="RHEA-COMP:9584"/>
        <dbReference type="Rhea" id="RHEA-COMP:9587"/>
        <dbReference type="ChEBI" id="CHEBI:15378"/>
        <dbReference type="ChEBI" id="CHEBI:15444"/>
        <dbReference type="ChEBI" id="CHEBI:57498"/>
        <dbReference type="ChEBI" id="CHEBI:456216"/>
        <dbReference type="EC" id="2.4.1.21"/>
    </reaction>
</comment>
<comment type="pathway">
    <text evidence="1">Glycan biosynthesis; glycogen biosynthesis.</text>
</comment>
<comment type="similarity">
    <text evidence="1">Belongs to the glycosyltransferase 1 family. Bacterial/plant glycogen synthase subfamily.</text>
</comment>
<organism>
    <name type="scientific">Nitrosococcus oceani (strain ATCC 19707 / BCRC 17464 / JCM 30415 / NCIMB 11848 / C-107)</name>
    <dbReference type="NCBI Taxonomy" id="323261"/>
    <lineage>
        <taxon>Bacteria</taxon>
        <taxon>Pseudomonadati</taxon>
        <taxon>Pseudomonadota</taxon>
        <taxon>Gammaproteobacteria</taxon>
        <taxon>Chromatiales</taxon>
        <taxon>Chromatiaceae</taxon>
        <taxon>Nitrosococcus</taxon>
    </lineage>
</organism>
<proteinExistence type="inferred from homology"/>
<dbReference type="EC" id="2.4.1.21" evidence="1"/>
<dbReference type="EMBL" id="CP000127">
    <property type="protein sequence ID" value="ABA57284.1"/>
    <property type="molecule type" value="Genomic_DNA"/>
</dbReference>
<dbReference type="SMR" id="Q3JD12"/>
<dbReference type="FunCoup" id="Q3JD12">
    <property type="interactions" value="271"/>
</dbReference>
<dbReference type="STRING" id="323261.Noc_0771"/>
<dbReference type="CAZy" id="GT5">
    <property type="family name" value="Glycosyltransferase Family 5"/>
</dbReference>
<dbReference type="KEGG" id="noc:Noc_0771"/>
<dbReference type="eggNOG" id="COG0297">
    <property type="taxonomic scope" value="Bacteria"/>
</dbReference>
<dbReference type="HOGENOM" id="CLU_009583_18_4_6"/>
<dbReference type="InParanoid" id="Q3JD12"/>
<dbReference type="UniPathway" id="UPA00164"/>
<dbReference type="Proteomes" id="UP000006838">
    <property type="component" value="Chromosome"/>
</dbReference>
<dbReference type="GO" id="GO:0009011">
    <property type="term" value="F:alpha-1,4-glucan glucosyltransferase (ADP-glucose donor) activity"/>
    <property type="evidence" value="ECO:0007669"/>
    <property type="project" value="UniProtKB-UniRule"/>
</dbReference>
<dbReference type="GO" id="GO:0004373">
    <property type="term" value="F:alpha-1,4-glucan glucosyltransferase (UDP-glucose donor) activity"/>
    <property type="evidence" value="ECO:0007669"/>
    <property type="project" value="InterPro"/>
</dbReference>
<dbReference type="GO" id="GO:0005978">
    <property type="term" value="P:glycogen biosynthetic process"/>
    <property type="evidence" value="ECO:0007669"/>
    <property type="project" value="UniProtKB-UniRule"/>
</dbReference>
<dbReference type="CDD" id="cd03791">
    <property type="entry name" value="GT5_Glycogen_synthase_DULL1-like"/>
    <property type="match status" value="1"/>
</dbReference>
<dbReference type="Gene3D" id="3.40.50.2000">
    <property type="entry name" value="Glycogen Phosphorylase B"/>
    <property type="match status" value="2"/>
</dbReference>
<dbReference type="HAMAP" id="MF_00484">
    <property type="entry name" value="Glycogen_synth"/>
    <property type="match status" value="1"/>
</dbReference>
<dbReference type="InterPro" id="IPR001296">
    <property type="entry name" value="Glyco_trans_1"/>
</dbReference>
<dbReference type="InterPro" id="IPR011835">
    <property type="entry name" value="GS/SS"/>
</dbReference>
<dbReference type="InterPro" id="IPR013534">
    <property type="entry name" value="Starch_synth_cat_dom"/>
</dbReference>
<dbReference type="NCBIfam" id="TIGR02095">
    <property type="entry name" value="glgA"/>
    <property type="match status" value="1"/>
</dbReference>
<dbReference type="NCBIfam" id="NF001899">
    <property type="entry name" value="PRK00654.1-2"/>
    <property type="match status" value="1"/>
</dbReference>
<dbReference type="PANTHER" id="PTHR45825:SF11">
    <property type="entry name" value="ALPHA AMYLASE DOMAIN-CONTAINING PROTEIN"/>
    <property type="match status" value="1"/>
</dbReference>
<dbReference type="PANTHER" id="PTHR45825">
    <property type="entry name" value="GRANULE-BOUND STARCH SYNTHASE 1, CHLOROPLASTIC/AMYLOPLASTIC"/>
    <property type="match status" value="1"/>
</dbReference>
<dbReference type="Pfam" id="PF08323">
    <property type="entry name" value="Glyco_transf_5"/>
    <property type="match status" value="1"/>
</dbReference>
<dbReference type="Pfam" id="PF00534">
    <property type="entry name" value="Glycos_transf_1"/>
    <property type="match status" value="1"/>
</dbReference>
<dbReference type="SUPFAM" id="SSF53756">
    <property type="entry name" value="UDP-Glycosyltransferase/glycogen phosphorylase"/>
    <property type="match status" value="1"/>
</dbReference>
<name>GLGA2_NITOC</name>
<evidence type="ECO:0000255" key="1">
    <source>
        <dbReference type="HAMAP-Rule" id="MF_00484"/>
    </source>
</evidence>
<protein>
    <recommendedName>
        <fullName evidence="1">Glycogen synthase 2</fullName>
        <ecNumber evidence="1">2.4.1.21</ecNumber>
    </recommendedName>
    <alternativeName>
        <fullName evidence="1">Starch [bacterial glycogen] synthase 2</fullName>
    </alternativeName>
</protein>
<accession>Q3JD12</accession>
<gene>
    <name evidence="1" type="primary">glgA2</name>
    <name type="ordered locus">Noc_0771</name>
</gene>